<organism>
    <name type="scientific">Maize streak virus genotype A (isolate Kenya)</name>
    <name type="common">MSV</name>
    <dbReference type="NCBI Taxonomy" id="10822"/>
    <lineage>
        <taxon>Viruses</taxon>
        <taxon>Monodnaviria</taxon>
        <taxon>Shotokuvirae</taxon>
        <taxon>Cressdnaviricota</taxon>
        <taxon>Repensiviricetes</taxon>
        <taxon>Geplafuvirales</taxon>
        <taxon>Geminiviridae</taxon>
        <taxon>Mastrevirus</taxon>
        <taxon>Maize streak virus</taxon>
    </lineage>
</organism>
<comment type="function">
    <text evidence="1">Encapsidates the viral genome into characteristic twinned ('geminate') particles. Binds the genomic viral ssDNA and shuttles it into and out of the cell nucleus. Plays a role in protection of the genome from degradation, virus acquisition and transmission by insect vectors, infectivity, and systemic movement. The CP of monopartite geminiviruses is absolutely essential for virus movement (By similarity).</text>
</comment>
<comment type="subunit">
    <text evidence="1">Homomultimer. Interacts with the movement protein. Binds to single-stranded and double-stranded viral DNA (By similarity).</text>
</comment>
<comment type="subcellular location">
    <subcellularLocation>
        <location evidence="1">Virion</location>
    </subcellularLocation>
    <subcellularLocation>
        <location evidence="1">Host nucleus</location>
    </subcellularLocation>
    <text evidence="1">It is actively transported into the host cell nucleus. It may be exported out of the nucleus through a nuclear export signal for cell-to-cell movement and spread (By similarity).</text>
</comment>
<comment type="similarity">
    <text evidence="3">Belongs to the geminiviridae capsid protein family.</text>
</comment>
<name>CAPSD_MSVK</name>
<gene>
    <name type="ORF">V1</name>
</gene>
<evidence type="ECO:0000250" key="1"/>
<evidence type="ECO:0000256" key="2">
    <source>
        <dbReference type="SAM" id="MobiDB-lite"/>
    </source>
</evidence>
<evidence type="ECO:0000305" key="3"/>
<proteinExistence type="inferred from homology"/>
<reference key="1">
    <citation type="journal article" date="1984" name="Nucleic Acids Res.">
        <title>Physical structure and genetic organisation of the genome of maize streak virus (Kenyan isolate).</title>
        <authorList>
            <person name="Howell S.H."/>
        </authorList>
    </citation>
    <scope>NUCLEOTIDE SEQUENCE [GENOMIC DNA]</scope>
</reference>
<protein>
    <recommendedName>
        <fullName>Capsid protein</fullName>
    </recommendedName>
    <alternativeName>
        <fullName>Coat protein</fullName>
        <shortName>CP</shortName>
    </alternativeName>
</protein>
<feature type="chain" id="PRO_0000222185" description="Capsid protein">
    <location>
        <begin position="1"/>
        <end position="244"/>
    </location>
</feature>
<feature type="region of interest" description="Disordered" evidence="2">
    <location>
        <begin position="1"/>
        <end position="39"/>
    </location>
</feature>
<feature type="short sequence motif" description="Bipartite nuclear localization signal" evidence="1">
    <location>
        <begin position="1"/>
        <end position="24"/>
    </location>
</feature>
<dbReference type="EMBL" id="X01089">
    <property type="protein sequence ID" value="CAB37352.1"/>
    <property type="molecule type" value="Genomic_DNA"/>
</dbReference>
<dbReference type="PIR" id="A04172">
    <property type="entry name" value="VCCVZ"/>
</dbReference>
<dbReference type="SMR" id="P03569"/>
<dbReference type="Proteomes" id="UP000008869">
    <property type="component" value="Genome"/>
</dbReference>
<dbReference type="GO" id="GO:0043657">
    <property type="term" value="C:host cell"/>
    <property type="evidence" value="ECO:0007669"/>
    <property type="project" value="GOC"/>
</dbReference>
<dbReference type="GO" id="GO:0042025">
    <property type="term" value="C:host cell nucleus"/>
    <property type="evidence" value="ECO:0007669"/>
    <property type="project" value="UniProtKB-SubCell"/>
</dbReference>
<dbReference type="GO" id="GO:0039615">
    <property type="term" value="C:T=1 icosahedral viral capsid"/>
    <property type="evidence" value="ECO:0007669"/>
    <property type="project" value="UniProtKB-KW"/>
</dbReference>
<dbReference type="GO" id="GO:0003677">
    <property type="term" value="F:DNA binding"/>
    <property type="evidence" value="ECO:0007669"/>
    <property type="project" value="UniProtKB-KW"/>
</dbReference>
<dbReference type="GO" id="GO:0005198">
    <property type="term" value="F:structural molecule activity"/>
    <property type="evidence" value="ECO:0007669"/>
    <property type="project" value="InterPro"/>
</dbReference>
<dbReference type="GO" id="GO:0046718">
    <property type="term" value="P:symbiont entry into host cell"/>
    <property type="evidence" value="ECO:0007669"/>
    <property type="project" value="UniProtKB-KW"/>
</dbReference>
<dbReference type="GO" id="GO:0075732">
    <property type="term" value="P:viral penetration into host nucleus"/>
    <property type="evidence" value="ECO:0007669"/>
    <property type="project" value="UniProtKB-KW"/>
</dbReference>
<dbReference type="Gene3D" id="2.60.120.20">
    <property type="match status" value="1"/>
</dbReference>
<dbReference type="InterPro" id="IPR000143">
    <property type="entry name" value="Gemcoat_MSV"/>
</dbReference>
<dbReference type="InterPro" id="IPR000263">
    <property type="entry name" value="GV_A/BR1_coat"/>
</dbReference>
<dbReference type="InterPro" id="IPR029053">
    <property type="entry name" value="Viral_coat"/>
</dbReference>
<dbReference type="Pfam" id="PF00844">
    <property type="entry name" value="Gemini_coat"/>
    <property type="match status" value="1"/>
</dbReference>
<dbReference type="PRINTS" id="PR00223">
    <property type="entry name" value="GEMCOATARBR1"/>
</dbReference>
<dbReference type="PRINTS" id="PR00226">
    <property type="entry name" value="GEMCOATMSV"/>
</dbReference>
<keyword id="KW-0167">Capsid protein</keyword>
<keyword id="KW-0238">DNA-binding</keyword>
<keyword id="KW-1048">Host nucleus</keyword>
<keyword id="KW-1140">T=1 icosahedral capsid protein</keyword>
<keyword id="KW-1163">Viral penetration into host nucleus</keyword>
<keyword id="KW-0946">Virion</keyword>
<keyword id="KW-1160">Virus entry into host cell</keyword>
<sequence>MSTSKRKRGDDANWSKRVTKKKPSSAGLKRAGSKADRPSLQIQTLQHAGTTMITVPSGGVCDLINTYARGSDEGNRHTSETLTYKIAVDYHFVADAAACPYSNTGTGVMWLVYDTTPGGQAPTPQTIFAYPDTLKAWPATWKVSRELCHRFVVKRRWLFNMETDGRIGSDIPPSNASWKPCKRNIYFHKFTSGLGVRTQWKNVTDGGVGAIQRGALYMVIAPGNGLTFTAHGQTRLYFKSVGNQ</sequence>
<accession>P03569</accession>
<organismHost>
    <name type="scientific">Avena sativa</name>
    <name type="common">Oat</name>
    <dbReference type="NCBI Taxonomy" id="4498"/>
</organismHost>
<organismHost>
    <name type="scientific">Axonopus compressus</name>
    <dbReference type="NCBI Taxonomy" id="217170"/>
</organismHost>
<organismHost>
    <name type="scientific">Cenchrus americanus</name>
    <name type="common">Pearl millet</name>
    <name type="synonym">Pennisetum glaucum</name>
    <dbReference type="NCBI Taxonomy" id="4543"/>
</organismHost>
<organismHost>
    <name type="scientific">Cenchrus polystachios</name>
    <dbReference type="NCBI Taxonomy" id="281129"/>
</organismHost>
<organismHost>
    <name type="scientific">Coix lacryma-jobi</name>
    <name type="common">Job's tears</name>
    <dbReference type="NCBI Taxonomy" id="4505"/>
</organismHost>
<organismHost>
    <name type="scientific">Dactyloctenium aegyptium</name>
    <dbReference type="NCBI Taxonomy" id="270102"/>
</organismHost>
<organismHost>
    <name type="scientific">Digitaria</name>
    <dbReference type="NCBI Taxonomy" id="66017"/>
</organismHost>
<organismHost>
    <name type="scientific">Echinochloa colona</name>
    <dbReference type="NCBI Taxonomy" id="90396"/>
</organismHost>
<organismHost>
    <name type="scientific">Eleusine coracana</name>
    <name type="common">Indian finger millet</name>
    <name type="synonym">Ragi</name>
    <dbReference type="NCBI Taxonomy" id="4511"/>
</organismHost>
<organismHost>
    <name type="scientific">Eleusine indica</name>
    <name type="common">Goosegrass</name>
    <name type="synonym">Cynosurus indicus</name>
    <dbReference type="NCBI Taxonomy" id="29674"/>
</organismHost>
<organismHost>
    <name type="scientific">Hordeum vulgare</name>
    <name type="common">Barley</name>
    <dbReference type="NCBI Taxonomy" id="4513"/>
</organismHost>
<organismHost>
    <name type="scientific">Megathyrsus maximus</name>
    <dbReference type="NCBI Taxonomy" id="59788"/>
</organismHost>
<organismHost>
    <name type="scientific">Melinis repens</name>
    <name type="common">Red Natal grass</name>
    <name type="synonym">Rhynchelytrum repens</name>
    <dbReference type="NCBI Taxonomy" id="29709"/>
</organismHost>
<organismHost>
    <name type="scientific">Oryza glaberrima</name>
    <name type="common">African rice</name>
    <dbReference type="NCBI Taxonomy" id="4538"/>
</organismHost>
<organismHost>
    <name type="scientific">Oryza sativa</name>
    <name type="common">Rice</name>
    <dbReference type="NCBI Taxonomy" id="4530"/>
</organismHost>
<organismHost>
    <name type="scientific">Paspalum conjugatum</name>
    <name type="common">Hilo grass</name>
    <dbReference type="NCBI Taxonomy" id="158143"/>
</organismHost>
<organismHost>
    <name type="scientific">Paspalum notatum</name>
    <name type="common">Bahia grass</name>
    <dbReference type="NCBI Taxonomy" id="147272"/>
</organismHost>
<organismHost>
    <name type="scientific">Paspalum scrobiculatum</name>
    <dbReference type="NCBI Taxonomy" id="173849"/>
</organismHost>
<organismHost>
    <name type="scientific">Rottboellia cochinchinensis</name>
    <dbReference type="NCBI Taxonomy" id="300125"/>
</organismHost>
<organismHost>
    <name type="scientific">Saccharum officinarum</name>
    <name type="common">Sugarcane</name>
    <dbReference type="NCBI Taxonomy" id="4547"/>
</organismHost>
<organismHost>
    <name type="scientific">Setaria barbata</name>
    <dbReference type="NCBI Taxonomy" id="192628"/>
</organismHost>
<organismHost>
    <name type="scientific">Triticum aestivum</name>
    <name type="common">Wheat</name>
    <dbReference type="NCBI Taxonomy" id="4565"/>
</organismHost>
<organismHost>
    <name type="scientific">Urochloa deflexa</name>
    <dbReference type="NCBI Taxonomy" id="240436"/>
</organismHost>
<organismHost>
    <name type="scientific">Zea mays</name>
    <name type="common">Maize</name>
    <dbReference type="NCBI Taxonomy" id="4577"/>
</organismHost>